<keyword id="KW-0067">ATP-binding</keyword>
<keyword id="KW-1003">Cell membrane</keyword>
<keyword id="KW-0418">Kinase</keyword>
<keyword id="KW-0472">Membrane</keyword>
<keyword id="KW-0547">Nucleotide-binding</keyword>
<keyword id="KW-0675">Receptor</keyword>
<keyword id="KW-1185">Reference proteome</keyword>
<keyword id="KW-0723">Serine/threonine-protein kinase</keyword>
<keyword id="KW-0808">Transferase</keyword>
<keyword id="KW-0812">Transmembrane</keyword>
<keyword id="KW-1133">Transmembrane helix</keyword>
<gene>
    <name type="primary">PERK2</name>
    <name type="ordered locus">At3g24400</name>
    <name type="ORF">K7M2.20</name>
</gene>
<feature type="chain" id="PRO_0000400054" description="Proline-rich receptor-like protein kinase PERK2">
    <location>
        <begin position="1"/>
        <end position="717"/>
    </location>
</feature>
<feature type="topological domain" description="Extracellular" evidence="2">
    <location>
        <begin position="1"/>
        <end position="228"/>
    </location>
</feature>
<feature type="transmembrane region" description="Helical" evidence="2">
    <location>
        <begin position="229"/>
        <end position="249"/>
    </location>
</feature>
<feature type="topological domain" description="Cytoplasmic" evidence="2">
    <location>
        <begin position="250"/>
        <end position="717"/>
    </location>
</feature>
<feature type="domain" description="Protein kinase" evidence="3">
    <location>
        <begin position="354"/>
        <end position="631"/>
    </location>
</feature>
<feature type="region of interest" description="Disordered" evidence="5">
    <location>
        <begin position="1"/>
        <end position="221"/>
    </location>
</feature>
<feature type="region of interest" description="Disordered" evidence="5">
    <location>
        <begin position="258"/>
        <end position="323"/>
    </location>
</feature>
<feature type="region of interest" description="Disordered" evidence="5">
    <location>
        <begin position="632"/>
        <end position="665"/>
    </location>
</feature>
<feature type="region of interest" description="Disordered" evidence="5">
    <location>
        <begin position="690"/>
        <end position="717"/>
    </location>
</feature>
<feature type="compositionally biased region" description="Pro residues" evidence="5">
    <location>
        <begin position="1"/>
        <end position="197"/>
    </location>
</feature>
<feature type="compositionally biased region" description="Low complexity" evidence="5">
    <location>
        <begin position="198"/>
        <end position="220"/>
    </location>
</feature>
<feature type="compositionally biased region" description="Pro residues" evidence="5">
    <location>
        <begin position="289"/>
        <end position="303"/>
    </location>
</feature>
<feature type="compositionally biased region" description="Low complexity" evidence="5">
    <location>
        <begin position="307"/>
        <end position="322"/>
    </location>
</feature>
<feature type="compositionally biased region" description="Polar residues" evidence="5">
    <location>
        <begin position="632"/>
        <end position="644"/>
    </location>
</feature>
<feature type="compositionally biased region" description="Polar residues" evidence="5">
    <location>
        <begin position="692"/>
        <end position="705"/>
    </location>
</feature>
<feature type="active site" description="Proton acceptor" evidence="3 4">
    <location>
        <position position="478"/>
    </location>
</feature>
<feature type="binding site" evidence="3">
    <location>
        <begin position="360"/>
        <end position="368"/>
    </location>
    <ligand>
        <name>ATP</name>
        <dbReference type="ChEBI" id="CHEBI:30616"/>
    </ligand>
</feature>
<feature type="binding site" evidence="3">
    <location>
        <position position="382"/>
    </location>
    <ligand>
        <name>ATP</name>
        <dbReference type="ChEBI" id="CHEBI:30616"/>
    </ligand>
</feature>
<sequence>MSSAPPPGGTPSPPPQPLPIPPPPQPLPVTPPPPPTALPPALPPPPPPTALPPALPPPPPPTTVPPIPPSTPSPPPPLTPSPLPPSPTTPSPPLTPSPTTPSPPLTPSPPPAITPSPPLTPSPLPPSPTTPSPPPPSPSIPSPPLTPSPPPSSPLRPSSPPPPSPATPSTPPRSPPPPSTPTPPPRVGSLSPPPPASPSGGRSPSTPSTTPGSSPPAQSSKELSKGAMVGIAIGGGFVLLVALALIFFLCKKKRRRDNEAPPAPIDGVPYGGQQQQNASRRSDHVVMSVPPPKSPSSAPPRPPHFMSSGSSGDYDSNYSDQSVLPPPSPGLALGLGIYQGTFNYEELSRATNGFSEANLLGQGGFGYVFKGMLRNGKEVAVKQLKEGSSQGEREFQAEVGIISRVHHRHLVALVGYCIADAQRLLVYEFVPNNTLEFHLHGKGRPTMEWSSRLKIAVGSAKGLSYLHENCNPKIIHRDIKASNILIDFKFEAKVADFGLAKIASDTNTHVSTRVMGTFGYLAPEYASSGKLTEKSDVFSFGVVLLELITGRRPIDVNNVHADNSLVDWARPLLNQVSELGNFEVVVDKKLNNEYDKEEMARMVACAAACVRSTAPRRPRMDQVARVLEGNISPSDLNQGITPGHSNVYGSSGGSTDYDSSQDNEGMNKFRKVGLETQDLYSNPISEYDLYPSWSSTDGQTTQGKATGNIKRPGQGYG</sequence>
<dbReference type="EC" id="2.7.11.1"/>
<dbReference type="EMBL" id="AP000382">
    <property type="protein sequence ID" value="BAB02941.1"/>
    <property type="status" value="ALT_SEQ"/>
    <property type="molecule type" value="Genomic_DNA"/>
</dbReference>
<dbReference type="EMBL" id="CP002686">
    <property type="status" value="NOT_ANNOTATED_CDS"/>
    <property type="molecule type" value="Genomic_DNA"/>
</dbReference>
<dbReference type="EMBL" id="AY536853">
    <property type="protein sequence ID" value="AAS65791.1"/>
    <property type="molecule type" value="mRNA"/>
</dbReference>
<dbReference type="SMR" id="Q9LK03"/>
<dbReference type="STRING" id="3702.Q9LK03"/>
<dbReference type="GlyGen" id="Q9LK03">
    <property type="glycosylation" value="13 sites"/>
</dbReference>
<dbReference type="Araport" id="AT3G24400"/>
<dbReference type="TAIR" id="AT3G24400"/>
<dbReference type="InParanoid" id="Q9LK03"/>
<dbReference type="PRO" id="PR:Q9LK03"/>
<dbReference type="Proteomes" id="UP000006548">
    <property type="component" value="Chromosome 3"/>
</dbReference>
<dbReference type="ExpressionAtlas" id="Q9LK03">
    <property type="expression patterns" value="baseline and differential"/>
</dbReference>
<dbReference type="GO" id="GO:0005886">
    <property type="term" value="C:plasma membrane"/>
    <property type="evidence" value="ECO:0007669"/>
    <property type="project" value="UniProtKB-SubCell"/>
</dbReference>
<dbReference type="GO" id="GO:0005524">
    <property type="term" value="F:ATP binding"/>
    <property type="evidence" value="ECO:0007669"/>
    <property type="project" value="UniProtKB-KW"/>
</dbReference>
<dbReference type="GO" id="GO:0106310">
    <property type="term" value="F:protein serine kinase activity"/>
    <property type="evidence" value="ECO:0007669"/>
    <property type="project" value="RHEA"/>
</dbReference>
<dbReference type="GO" id="GO:0004674">
    <property type="term" value="F:protein serine/threonine kinase activity"/>
    <property type="evidence" value="ECO:0007669"/>
    <property type="project" value="UniProtKB-KW"/>
</dbReference>
<dbReference type="CDD" id="cd14066">
    <property type="entry name" value="STKc_IRAK"/>
    <property type="match status" value="1"/>
</dbReference>
<dbReference type="FunFam" id="3.30.200.20:FF:000212">
    <property type="entry name" value="Proline-rich receptor-like protein kinase PERK8"/>
    <property type="match status" value="1"/>
</dbReference>
<dbReference type="FunFam" id="1.10.510.10:FF:000173">
    <property type="entry name" value="proline-rich receptor-like protein kinase PERK8"/>
    <property type="match status" value="1"/>
</dbReference>
<dbReference type="Gene3D" id="3.30.200.20">
    <property type="entry name" value="Phosphorylase Kinase, domain 1"/>
    <property type="match status" value="1"/>
</dbReference>
<dbReference type="Gene3D" id="1.10.510.10">
    <property type="entry name" value="Transferase(Phosphotransferase) domain 1"/>
    <property type="match status" value="1"/>
</dbReference>
<dbReference type="InterPro" id="IPR011009">
    <property type="entry name" value="Kinase-like_dom_sf"/>
</dbReference>
<dbReference type="InterPro" id="IPR047117">
    <property type="entry name" value="PERK1-13-like"/>
</dbReference>
<dbReference type="InterPro" id="IPR000719">
    <property type="entry name" value="Prot_kinase_dom"/>
</dbReference>
<dbReference type="InterPro" id="IPR017441">
    <property type="entry name" value="Protein_kinase_ATP_BS"/>
</dbReference>
<dbReference type="InterPro" id="IPR001245">
    <property type="entry name" value="Ser-Thr/Tyr_kinase_cat_dom"/>
</dbReference>
<dbReference type="InterPro" id="IPR008271">
    <property type="entry name" value="Ser/Thr_kinase_AS"/>
</dbReference>
<dbReference type="PANTHER" id="PTHR47982:SF51">
    <property type="entry name" value="PROLINE-RICH RECEPTOR-LIKE PROTEIN KINASE PERK2"/>
    <property type="match status" value="1"/>
</dbReference>
<dbReference type="PANTHER" id="PTHR47982">
    <property type="entry name" value="PROLINE-RICH RECEPTOR-LIKE PROTEIN KINASE PERK4"/>
    <property type="match status" value="1"/>
</dbReference>
<dbReference type="Pfam" id="PF07714">
    <property type="entry name" value="PK_Tyr_Ser-Thr"/>
    <property type="match status" value="1"/>
</dbReference>
<dbReference type="PRINTS" id="PR01217">
    <property type="entry name" value="PRICHEXTENSN"/>
</dbReference>
<dbReference type="SMART" id="SM00220">
    <property type="entry name" value="S_TKc"/>
    <property type="match status" value="1"/>
</dbReference>
<dbReference type="SUPFAM" id="SSF56112">
    <property type="entry name" value="Protein kinase-like (PK-like)"/>
    <property type="match status" value="1"/>
</dbReference>
<dbReference type="PROSITE" id="PS00107">
    <property type="entry name" value="PROTEIN_KINASE_ATP"/>
    <property type="match status" value="1"/>
</dbReference>
<dbReference type="PROSITE" id="PS50011">
    <property type="entry name" value="PROTEIN_KINASE_DOM"/>
    <property type="match status" value="1"/>
</dbReference>
<dbReference type="PROSITE" id="PS00108">
    <property type="entry name" value="PROTEIN_KINASE_ST"/>
    <property type="match status" value="1"/>
</dbReference>
<evidence type="ECO:0000250" key="1"/>
<evidence type="ECO:0000255" key="2"/>
<evidence type="ECO:0000255" key="3">
    <source>
        <dbReference type="PROSITE-ProRule" id="PRU00159"/>
    </source>
</evidence>
<evidence type="ECO:0000255" key="4">
    <source>
        <dbReference type="PROSITE-ProRule" id="PRU10027"/>
    </source>
</evidence>
<evidence type="ECO:0000256" key="5">
    <source>
        <dbReference type="SAM" id="MobiDB-lite"/>
    </source>
</evidence>
<evidence type="ECO:0000269" key="6">
    <source>
    </source>
</evidence>
<evidence type="ECO:0000305" key="7"/>
<comment type="catalytic activity">
    <reaction>
        <text>L-seryl-[protein] + ATP = O-phospho-L-seryl-[protein] + ADP + H(+)</text>
        <dbReference type="Rhea" id="RHEA:17989"/>
        <dbReference type="Rhea" id="RHEA-COMP:9863"/>
        <dbReference type="Rhea" id="RHEA-COMP:11604"/>
        <dbReference type="ChEBI" id="CHEBI:15378"/>
        <dbReference type="ChEBI" id="CHEBI:29999"/>
        <dbReference type="ChEBI" id="CHEBI:30616"/>
        <dbReference type="ChEBI" id="CHEBI:83421"/>
        <dbReference type="ChEBI" id="CHEBI:456216"/>
        <dbReference type="EC" id="2.7.11.1"/>
    </reaction>
</comment>
<comment type="catalytic activity">
    <reaction>
        <text>L-threonyl-[protein] + ATP = O-phospho-L-threonyl-[protein] + ADP + H(+)</text>
        <dbReference type="Rhea" id="RHEA:46608"/>
        <dbReference type="Rhea" id="RHEA-COMP:11060"/>
        <dbReference type="Rhea" id="RHEA-COMP:11605"/>
        <dbReference type="ChEBI" id="CHEBI:15378"/>
        <dbReference type="ChEBI" id="CHEBI:30013"/>
        <dbReference type="ChEBI" id="CHEBI:30616"/>
        <dbReference type="ChEBI" id="CHEBI:61977"/>
        <dbReference type="ChEBI" id="CHEBI:456216"/>
        <dbReference type="EC" id="2.7.11.1"/>
    </reaction>
</comment>
<comment type="subcellular location">
    <subcellularLocation>
        <location evidence="1">Cell membrane</location>
        <topology evidence="1">Single-pass membrane protein</topology>
    </subcellularLocation>
</comment>
<comment type="tissue specificity">
    <text evidence="6">Mostly expressed in inflorescence bolt, flower buds and siliques, and, to a lower extent, in roots, seedlings and leaves.</text>
</comment>
<comment type="similarity">
    <text evidence="3">Belongs to the protein kinase superfamily. Ser/Thr protein kinase family.</text>
</comment>
<comment type="sequence caution" evidence="7">
    <conflict type="erroneous gene model prediction">
        <sequence resource="EMBL-CDS" id="BAB02941"/>
    </conflict>
</comment>
<proteinExistence type="evidence at transcript level"/>
<accession>Q9LK03</accession>
<accession>Q6QJ30</accession>
<organism>
    <name type="scientific">Arabidopsis thaliana</name>
    <name type="common">Mouse-ear cress</name>
    <dbReference type="NCBI Taxonomy" id="3702"/>
    <lineage>
        <taxon>Eukaryota</taxon>
        <taxon>Viridiplantae</taxon>
        <taxon>Streptophyta</taxon>
        <taxon>Embryophyta</taxon>
        <taxon>Tracheophyta</taxon>
        <taxon>Spermatophyta</taxon>
        <taxon>Magnoliopsida</taxon>
        <taxon>eudicotyledons</taxon>
        <taxon>Gunneridae</taxon>
        <taxon>Pentapetalae</taxon>
        <taxon>rosids</taxon>
        <taxon>malvids</taxon>
        <taxon>Brassicales</taxon>
        <taxon>Brassicaceae</taxon>
        <taxon>Camelineae</taxon>
        <taxon>Arabidopsis</taxon>
    </lineage>
</organism>
<protein>
    <recommendedName>
        <fullName>Proline-rich receptor-like protein kinase PERK2</fullName>
        <ecNumber>2.7.11.1</ecNumber>
    </recommendedName>
    <alternativeName>
        <fullName>Proline-rich extensin-like receptor kinase 2</fullName>
        <shortName>AtPERK2</shortName>
    </alternativeName>
    <alternativeName>
        <fullName>Somatic embryogenesis receptor kinase-like protein</fullName>
    </alternativeName>
</protein>
<name>PERK2_ARATH</name>
<reference key="1">
    <citation type="journal article" date="2000" name="DNA Res.">
        <title>Structural analysis of Arabidopsis thaliana chromosome 3. II. Sequence features of the 4,251,695 bp regions covered by 90 P1, TAC and BAC clones.</title>
        <authorList>
            <person name="Kaneko T."/>
            <person name="Katoh T."/>
            <person name="Sato S."/>
            <person name="Nakamura Y."/>
            <person name="Asamizu E."/>
            <person name="Tabata S."/>
        </authorList>
    </citation>
    <scope>NUCLEOTIDE SEQUENCE [LARGE SCALE GENOMIC DNA]</scope>
    <source>
        <strain>cv. Columbia</strain>
    </source>
</reference>
<reference key="2">
    <citation type="journal article" date="2017" name="Plant J.">
        <title>Araport11: a complete reannotation of the Arabidopsis thaliana reference genome.</title>
        <authorList>
            <person name="Cheng C.Y."/>
            <person name="Krishnakumar V."/>
            <person name="Chan A.P."/>
            <person name="Thibaud-Nissen F."/>
            <person name="Schobel S."/>
            <person name="Town C.D."/>
        </authorList>
    </citation>
    <scope>GENOME REANNOTATION</scope>
    <source>
        <strain>cv. Columbia</strain>
    </source>
</reference>
<reference key="3">
    <citation type="submission" date="2004-01" db="EMBL/GenBank/DDBJ databases">
        <title>Protein kinases in chloroplasts.</title>
        <authorList>
            <person name="Kurth J."/>
            <person name="Leister D."/>
        </authorList>
    </citation>
    <scope>NUCLEOTIDE SEQUENCE [MRNA] OF 618-717</scope>
    <source>
        <strain>cv. Columbia</strain>
    </source>
</reference>
<reference key="4">
    <citation type="journal article" date="2002" name="Plant Mol. Biol.">
        <title>The proline-rich, extensin-like receptor kinase-1 (PERK1) gene is rapidly induced by wounding.</title>
        <authorList>
            <person name="Silva N.F."/>
            <person name="Goring D.R."/>
        </authorList>
    </citation>
    <scope>GENE FAMILY</scope>
</reference>
<reference key="5">
    <citation type="journal article" date="2004" name="Plant Cell Physiol.">
        <title>A comprehensive expression analysis of the Arabidopsis proline-rich extensin-like receptor kinase gene family using bioinformatic and experimental approaches.</title>
        <authorList>
            <person name="Nakhamchik A."/>
            <person name="Zhao Z."/>
            <person name="Provart N.J."/>
            <person name="Shiu S.-H."/>
            <person name="Keatley S.K."/>
            <person name="Cameron R.K."/>
            <person name="Goring D.R."/>
        </authorList>
    </citation>
    <scope>TISSUE SPECIFICITY</scope>
    <scope>GENE FAMILY</scope>
    <scope>NOMENCLATURE</scope>
</reference>